<reference key="1">
    <citation type="journal article" date="2009" name="PLoS Genet.">
        <title>Organised genome dynamics in the Escherichia coli species results in highly diverse adaptive paths.</title>
        <authorList>
            <person name="Touchon M."/>
            <person name="Hoede C."/>
            <person name="Tenaillon O."/>
            <person name="Barbe V."/>
            <person name="Baeriswyl S."/>
            <person name="Bidet P."/>
            <person name="Bingen E."/>
            <person name="Bonacorsi S."/>
            <person name="Bouchier C."/>
            <person name="Bouvet O."/>
            <person name="Calteau A."/>
            <person name="Chiapello H."/>
            <person name="Clermont O."/>
            <person name="Cruveiller S."/>
            <person name="Danchin A."/>
            <person name="Diard M."/>
            <person name="Dossat C."/>
            <person name="Karoui M.E."/>
            <person name="Frapy E."/>
            <person name="Garry L."/>
            <person name="Ghigo J.M."/>
            <person name="Gilles A.M."/>
            <person name="Johnson J."/>
            <person name="Le Bouguenec C."/>
            <person name="Lescat M."/>
            <person name="Mangenot S."/>
            <person name="Martinez-Jehanne V."/>
            <person name="Matic I."/>
            <person name="Nassif X."/>
            <person name="Oztas S."/>
            <person name="Petit M.A."/>
            <person name="Pichon C."/>
            <person name="Rouy Z."/>
            <person name="Ruf C.S."/>
            <person name="Schneider D."/>
            <person name="Tourret J."/>
            <person name="Vacherie B."/>
            <person name="Vallenet D."/>
            <person name="Medigue C."/>
            <person name="Rocha E.P.C."/>
            <person name="Denamur E."/>
        </authorList>
    </citation>
    <scope>NUCLEOTIDE SEQUENCE [LARGE SCALE GENOMIC DNA]</scope>
    <source>
        <strain>ED1a</strain>
    </source>
</reference>
<accession>B7MP64</accession>
<gene>
    <name evidence="1" type="primary">yafD</name>
    <name type="ordered locus">ECED1_0214</name>
</gene>
<name>YAFD_ECO81</name>
<proteinExistence type="inferred from homology"/>
<feature type="chain" id="PRO_1000164042" description="UPF0294 protein YafD">
    <location>
        <begin position="1"/>
        <end position="266"/>
    </location>
</feature>
<comment type="subcellular location">
    <subcellularLocation>
        <location evidence="1">Cytoplasm</location>
    </subcellularLocation>
</comment>
<comment type="similarity">
    <text evidence="1">Belongs to the UPF0294 family.</text>
</comment>
<dbReference type="EMBL" id="CU928162">
    <property type="protein sequence ID" value="CAR06430.1"/>
    <property type="molecule type" value="Genomic_DNA"/>
</dbReference>
<dbReference type="RefSeq" id="WP_001230983.1">
    <property type="nucleotide sequence ID" value="NC_011745.1"/>
</dbReference>
<dbReference type="SMR" id="B7MP64"/>
<dbReference type="KEGG" id="ecq:ECED1_0214"/>
<dbReference type="HOGENOM" id="CLU_083563_0_0_6"/>
<dbReference type="Proteomes" id="UP000000748">
    <property type="component" value="Chromosome"/>
</dbReference>
<dbReference type="GO" id="GO:0005737">
    <property type="term" value="C:cytoplasm"/>
    <property type="evidence" value="ECO:0007669"/>
    <property type="project" value="UniProtKB-SubCell"/>
</dbReference>
<dbReference type="GO" id="GO:0003824">
    <property type="term" value="F:catalytic activity"/>
    <property type="evidence" value="ECO:0007669"/>
    <property type="project" value="InterPro"/>
</dbReference>
<dbReference type="Gene3D" id="3.60.10.10">
    <property type="entry name" value="Endonuclease/exonuclease/phosphatase"/>
    <property type="match status" value="1"/>
</dbReference>
<dbReference type="HAMAP" id="MF_01119">
    <property type="entry name" value="UPF0294"/>
    <property type="match status" value="1"/>
</dbReference>
<dbReference type="InterPro" id="IPR036691">
    <property type="entry name" value="Endo/exonu/phosph_ase_sf"/>
</dbReference>
<dbReference type="InterPro" id="IPR005135">
    <property type="entry name" value="Endo/exonuclease/phosphatase"/>
</dbReference>
<dbReference type="InterPro" id="IPR022958">
    <property type="entry name" value="UPF0294"/>
</dbReference>
<dbReference type="NCBIfam" id="NF003839">
    <property type="entry name" value="PRK05421.1-1"/>
    <property type="match status" value="1"/>
</dbReference>
<dbReference type="NCBIfam" id="NF003840">
    <property type="entry name" value="PRK05421.1-2"/>
    <property type="match status" value="1"/>
</dbReference>
<dbReference type="NCBIfam" id="NF003841">
    <property type="entry name" value="PRK05421.1-3"/>
    <property type="match status" value="1"/>
</dbReference>
<dbReference type="NCBIfam" id="NF003842">
    <property type="entry name" value="PRK05421.1-4"/>
    <property type="match status" value="1"/>
</dbReference>
<dbReference type="Pfam" id="PF03372">
    <property type="entry name" value="Exo_endo_phos"/>
    <property type="match status" value="1"/>
</dbReference>
<dbReference type="SUPFAM" id="SSF56219">
    <property type="entry name" value="DNase I-like"/>
    <property type="match status" value="1"/>
</dbReference>
<keyword id="KW-0963">Cytoplasm</keyword>
<sequence>MRKNTYAMRYVAGQPAERILPPGSFASIGQALPPGEPLSTEERIRILVWNIYKQQRAEWLSVLKNYGKDAHLVLLQEAQTTPELVQFATANYLAADQVPAFVLPQHPSGVMTLSAAHPVYCCPLREREPILRLAKSALVTVYPLPDTRLLMVVNIHAVNFSLGVDVYSKQLLPIGDQIAHHSGPVIMAGDFNAWSRRRMNALYRFAREMSLRQVRFTDDQRRRAFGRPLDFVFYRGLNVSEASVLVTRASDHNPLLVEFSPGKPDK</sequence>
<organism>
    <name type="scientific">Escherichia coli O81 (strain ED1a)</name>
    <dbReference type="NCBI Taxonomy" id="585397"/>
    <lineage>
        <taxon>Bacteria</taxon>
        <taxon>Pseudomonadati</taxon>
        <taxon>Pseudomonadota</taxon>
        <taxon>Gammaproteobacteria</taxon>
        <taxon>Enterobacterales</taxon>
        <taxon>Enterobacteriaceae</taxon>
        <taxon>Escherichia</taxon>
    </lineage>
</organism>
<evidence type="ECO:0000255" key="1">
    <source>
        <dbReference type="HAMAP-Rule" id="MF_01119"/>
    </source>
</evidence>
<protein>
    <recommendedName>
        <fullName evidence="1">UPF0294 protein YafD</fullName>
    </recommendedName>
</protein>